<feature type="chain" id="PRO_0000409225" description="Smc-like protein Sph1">
    <location>
        <begin position="1"/>
        <end position="629"/>
    </location>
</feature>
<feature type="coiled-coil region" evidence="2">
    <location>
        <begin position="139"/>
        <end position="282"/>
    </location>
</feature>
<feature type="coiled-coil region" evidence="2">
    <location>
        <begin position="318"/>
        <end position="487"/>
    </location>
</feature>
<gene>
    <name type="primary">sph1</name>
    <name type="ordered locus">VNG_6320C</name>
</gene>
<sequence length="629" mass="70887">MWNVDVTCIGGIRSGEATLRPGPNIVQASNFQGKSSFLAAIQTAIGTTGLLTEDHPLMENEDDGKVTLETDEETYTVSLTRATDSDEPAISRSGTPYLTRDQDQIAARLFAVLGEDNPIRAAVREENQERLTELLKKPLETENIDLRIEALQREIKELEDEVAAAEAASADLPAAQQKVTRLQGELRDLNETRDELERKVDEETDQRALRDELTAKQSDLEREEARLERLENQVDRRKAQLDDKEAALESLDIPDSPTAEADIAEKQTRIDELAVKIDLLDDLHRSTKAIIDEGEIDLITDVERTLSGDTFSCFVCGAETTAEAVTERLNEISDRQESLREQRATLTEEVTQMQQRTREIESKRQQKAELEDEIKRLRVDIQEDQHEVRSIEATIEELQAEIEQREAEYEAAEKAGESHSAELKTIQQKIGSTETKLDRAQAELERIEAELQKRNDRQEQLETKRDELETLRQRRKQKYNELVNQFDAAMADIIGRFAPGFDGAYLDQKTDANDTVGFEINLARDGHTTDLDTLSEGERELVGIVTALAGYRTFSVGDRVPCILLDGIGQLAAEHIRHMIEYLENTAEILVTTAYPEAGSFDGETVSPEHWDVISHETAQSRDHPQITN</sequence>
<proteinExistence type="inferred from homology"/>
<name>SPH1_HALSA</name>
<keyword id="KW-0175">Coiled coil</keyword>
<keyword id="KW-0963">Cytoplasm</keyword>
<keyword id="KW-0614">Plasmid</keyword>
<keyword id="KW-1185">Reference proteome</keyword>
<accession>Q9HHM7</accession>
<organism>
    <name type="scientific">Halobacterium salinarum (strain ATCC 700922 / JCM 11081 / NRC-1)</name>
    <name type="common">Halobacterium halobium</name>
    <dbReference type="NCBI Taxonomy" id="64091"/>
    <lineage>
        <taxon>Archaea</taxon>
        <taxon>Methanobacteriati</taxon>
        <taxon>Methanobacteriota</taxon>
        <taxon>Stenosarchaea group</taxon>
        <taxon>Halobacteria</taxon>
        <taxon>Halobacteriales</taxon>
        <taxon>Halobacteriaceae</taxon>
        <taxon>Halobacterium</taxon>
        <taxon>Halobacterium salinarum NRC-34001</taxon>
    </lineage>
</organism>
<comment type="function">
    <text evidence="1">May play a role in a late step of replication.</text>
</comment>
<comment type="subcellular location">
    <subcellularLocation>
        <location evidence="1">Cytoplasm</location>
    </subcellularLocation>
</comment>
<comment type="similarity">
    <text evidence="3">Belongs to the Sph1/Sph2 family.</text>
</comment>
<dbReference type="EMBL" id="AE004438">
    <property type="protein sequence ID" value="AAG20951.1"/>
    <property type="molecule type" value="Genomic_DNA"/>
</dbReference>
<dbReference type="RefSeq" id="WP_010904164.1">
    <property type="nucleotide sequence ID" value="NZ_BK010831.1"/>
</dbReference>
<dbReference type="SMR" id="Q9HHM7"/>
<dbReference type="GeneID" id="68695255"/>
<dbReference type="KEGG" id="hal:VNG_6320C"/>
<dbReference type="PATRIC" id="fig|64091.14.peg.2297"/>
<dbReference type="HOGENOM" id="CLU_434529_0_0_2"/>
<dbReference type="InParanoid" id="Q9HHM7"/>
<dbReference type="OrthoDB" id="241568at2157"/>
<dbReference type="PhylomeDB" id="Q9HHM7"/>
<dbReference type="Proteomes" id="UP000000554">
    <property type="component" value="Plasmid pNRC200"/>
</dbReference>
<dbReference type="GO" id="GO:0005737">
    <property type="term" value="C:cytoplasm"/>
    <property type="evidence" value="ECO:0007669"/>
    <property type="project" value="UniProtKB-SubCell"/>
</dbReference>
<dbReference type="GO" id="GO:1990391">
    <property type="term" value="C:DNA repair complex"/>
    <property type="evidence" value="ECO:0000318"/>
    <property type="project" value="GO_Central"/>
</dbReference>
<dbReference type="GO" id="GO:0004529">
    <property type="term" value="F:DNA exonuclease activity"/>
    <property type="evidence" value="ECO:0000318"/>
    <property type="project" value="GO_Central"/>
</dbReference>
<dbReference type="GO" id="GO:0006281">
    <property type="term" value="P:DNA repair"/>
    <property type="evidence" value="ECO:0000318"/>
    <property type="project" value="GO_Central"/>
</dbReference>
<dbReference type="Gene3D" id="3.40.50.300">
    <property type="entry name" value="P-loop containing nucleotide triphosphate hydrolases"/>
    <property type="match status" value="2"/>
</dbReference>
<dbReference type="InterPro" id="IPR027417">
    <property type="entry name" value="P-loop_NTPase"/>
</dbReference>
<dbReference type="NCBIfam" id="NF045487">
    <property type="entry name" value="ASRP"/>
    <property type="match status" value="1"/>
</dbReference>
<dbReference type="PANTHER" id="PTHR32114">
    <property type="entry name" value="ABC TRANSPORTER ABCH.3"/>
    <property type="match status" value="1"/>
</dbReference>
<dbReference type="PANTHER" id="PTHR32114:SF2">
    <property type="entry name" value="ABC TRANSPORTER ABCH.3"/>
    <property type="match status" value="1"/>
</dbReference>
<dbReference type="SUPFAM" id="SSF52540">
    <property type="entry name" value="P-loop containing nucleoside triphosphate hydrolases"/>
    <property type="match status" value="1"/>
</dbReference>
<dbReference type="SUPFAM" id="SSF57997">
    <property type="entry name" value="Tropomyosin"/>
    <property type="match status" value="1"/>
</dbReference>
<evidence type="ECO:0000250" key="1"/>
<evidence type="ECO:0000255" key="2"/>
<evidence type="ECO:0000305" key="3"/>
<geneLocation type="plasmid">
    <name>pNRC200</name>
</geneLocation>
<reference key="1">
    <citation type="journal article" date="2000" name="Proc. Natl. Acad. Sci. U.S.A.">
        <title>Genome sequence of Halobacterium species NRC-1.</title>
        <authorList>
            <person name="Ng W.V."/>
            <person name="Kennedy S.P."/>
            <person name="Mahairas G.G."/>
            <person name="Berquist B."/>
            <person name="Pan M."/>
            <person name="Shukla H.D."/>
            <person name="Lasky S.R."/>
            <person name="Baliga N.S."/>
            <person name="Thorsson V."/>
            <person name="Sbrogna J."/>
            <person name="Swartzell S."/>
            <person name="Weir D."/>
            <person name="Hall J."/>
            <person name="Dahl T.A."/>
            <person name="Welti R."/>
            <person name="Goo Y.A."/>
            <person name="Leithauser B."/>
            <person name="Keller K."/>
            <person name="Cruz R."/>
            <person name="Danson M.J."/>
            <person name="Hough D.W."/>
            <person name="Maddocks D.G."/>
            <person name="Jablonski P.E."/>
            <person name="Krebs M.P."/>
            <person name="Angevine C.M."/>
            <person name="Dale H."/>
            <person name="Isenbarger T.A."/>
            <person name="Peck R.F."/>
            <person name="Pohlschroder M."/>
            <person name="Spudich J.L."/>
            <person name="Jung K.-H."/>
            <person name="Alam M."/>
            <person name="Freitas T."/>
            <person name="Hou S."/>
            <person name="Daniels C.J."/>
            <person name="Dennis P.P."/>
            <person name="Omer A.D."/>
            <person name="Ebhardt H."/>
            <person name="Lowe T.M."/>
            <person name="Liang P."/>
            <person name="Riley M."/>
            <person name="Hood L."/>
            <person name="DasSarma S."/>
        </authorList>
    </citation>
    <scope>NUCLEOTIDE SEQUENCE [LARGE SCALE GENOMIC DNA]</scope>
    <source>
        <strain>ATCC 700922 / JCM 11081 / NRC-1</strain>
    </source>
</reference>
<protein>
    <recommendedName>
        <fullName>Smc-like protein Sph1</fullName>
    </recommendedName>
</protein>